<evidence type="ECO:0000255" key="1">
    <source>
        <dbReference type="HAMAP-Rule" id="MF_00335"/>
    </source>
</evidence>
<evidence type="ECO:0000255" key="2">
    <source>
        <dbReference type="PROSITE-ProRule" id="PRU01175"/>
    </source>
</evidence>
<keyword id="KW-1003">Cell membrane</keyword>
<keyword id="KW-0255">Endonuclease</keyword>
<keyword id="KW-0378">Hydrolase</keyword>
<keyword id="KW-0472">Membrane</keyword>
<keyword id="KW-0540">Nuclease</keyword>
<keyword id="KW-1185">Reference proteome</keyword>
<keyword id="KW-0694">RNA-binding</keyword>
<keyword id="KW-0812">Transmembrane</keyword>
<keyword id="KW-1133">Transmembrane helix</keyword>
<name>RNY_PARUW</name>
<gene>
    <name evidence="1" type="primary">rny</name>
    <name type="ordered locus">pc1056</name>
</gene>
<comment type="function">
    <text evidence="1">Endoribonuclease that initiates mRNA decay.</text>
</comment>
<comment type="subcellular location">
    <subcellularLocation>
        <location evidence="1">Cell membrane</location>
        <topology evidence="1">Single-pass membrane protein</topology>
    </subcellularLocation>
</comment>
<comment type="similarity">
    <text evidence="1">Belongs to the RNase Y family.</text>
</comment>
<dbReference type="EC" id="3.1.-.-" evidence="1"/>
<dbReference type="EMBL" id="BX908798">
    <property type="protein sequence ID" value="CAF23780.1"/>
    <property type="molecule type" value="Genomic_DNA"/>
</dbReference>
<dbReference type="RefSeq" id="WP_011175606.1">
    <property type="nucleotide sequence ID" value="NC_005861.2"/>
</dbReference>
<dbReference type="SMR" id="Q6MCB9"/>
<dbReference type="STRING" id="264201.pc1056"/>
<dbReference type="KEGG" id="pcu:PC_RS05085"/>
<dbReference type="eggNOG" id="COG1418">
    <property type="taxonomic scope" value="Bacteria"/>
</dbReference>
<dbReference type="eggNOG" id="COG4942">
    <property type="taxonomic scope" value="Bacteria"/>
</dbReference>
<dbReference type="HOGENOM" id="CLU_028328_1_0_0"/>
<dbReference type="OrthoDB" id="9803205at2"/>
<dbReference type="Proteomes" id="UP000000529">
    <property type="component" value="Chromosome"/>
</dbReference>
<dbReference type="GO" id="GO:0005886">
    <property type="term" value="C:plasma membrane"/>
    <property type="evidence" value="ECO:0007669"/>
    <property type="project" value="UniProtKB-SubCell"/>
</dbReference>
<dbReference type="GO" id="GO:0003723">
    <property type="term" value="F:RNA binding"/>
    <property type="evidence" value="ECO:0007669"/>
    <property type="project" value="UniProtKB-UniRule"/>
</dbReference>
<dbReference type="GO" id="GO:0004521">
    <property type="term" value="F:RNA endonuclease activity"/>
    <property type="evidence" value="ECO:0007669"/>
    <property type="project" value="UniProtKB-UniRule"/>
</dbReference>
<dbReference type="GO" id="GO:0006402">
    <property type="term" value="P:mRNA catabolic process"/>
    <property type="evidence" value="ECO:0007669"/>
    <property type="project" value="UniProtKB-UniRule"/>
</dbReference>
<dbReference type="CDD" id="cd00077">
    <property type="entry name" value="HDc"/>
    <property type="match status" value="1"/>
</dbReference>
<dbReference type="CDD" id="cd22431">
    <property type="entry name" value="KH-I_RNaseY"/>
    <property type="match status" value="1"/>
</dbReference>
<dbReference type="Gene3D" id="3.30.300.20">
    <property type="match status" value="1"/>
</dbReference>
<dbReference type="Gene3D" id="1.10.3210.10">
    <property type="entry name" value="Hypothetical protein af1432"/>
    <property type="match status" value="1"/>
</dbReference>
<dbReference type="HAMAP" id="MF_00335">
    <property type="entry name" value="RNase_Y"/>
    <property type="match status" value="1"/>
</dbReference>
<dbReference type="InterPro" id="IPR003607">
    <property type="entry name" value="HD/PDEase_dom"/>
</dbReference>
<dbReference type="InterPro" id="IPR006674">
    <property type="entry name" value="HD_domain"/>
</dbReference>
<dbReference type="InterPro" id="IPR006675">
    <property type="entry name" value="HDIG_dom"/>
</dbReference>
<dbReference type="InterPro" id="IPR004087">
    <property type="entry name" value="KH_dom"/>
</dbReference>
<dbReference type="InterPro" id="IPR015946">
    <property type="entry name" value="KH_dom-like_a/b"/>
</dbReference>
<dbReference type="InterPro" id="IPR004088">
    <property type="entry name" value="KH_dom_type_1"/>
</dbReference>
<dbReference type="InterPro" id="IPR036612">
    <property type="entry name" value="KH_dom_type_1_sf"/>
</dbReference>
<dbReference type="InterPro" id="IPR017705">
    <property type="entry name" value="Ribonuclease_Y"/>
</dbReference>
<dbReference type="InterPro" id="IPR022711">
    <property type="entry name" value="RNase_Y_N"/>
</dbReference>
<dbReference type="NCBIfam" id="TIGR00277">
    <property type="entry name" value="HDIG"/>
    <property type="match status" value="1"/>
</dbReference>
<dbReference type="NCBIfam" id="TIGR03319">
    <property type="entry name" value="RNase_Y"/>
    <property type="match status" value="1"/>
</dbReference>
<dbReference type="PANTHER" id="PTHR12826">
    <property type="entry name" value="RIBONUCLEASE Y"/>
    <property type="match status" value="1"/>
</dbReference>
<dbReference type="PANTHER" id="PTHR12826:SF15">
    <property type="entry name" value="RIBONUCLEASE Y"/>
    <property type="match status" value="1"/>
</dbReference>
<dbReference type="Pfam" id="PF01966">
    <property type="entry name" value="HD"/>
    <property type="match status" value="1"/>
</dbReference>
<dbReference type="Pfam" id="PF00013">
    <property type="entry name" value="KH_1"/>
    <property type="match status" value="1"/>
</dbReference>
<dbReference type="Pfam" id="PF12072">
    <property type="entry name" value="RNase_Y_N"/>
    <property type="match status" value="1"/>
</dbReference>
<dbReference type="SMART" id="SM00471">
    <property type="entry name" value="HDc"/>
    <property type="match status" value="1"/>
</dbReference>
<dbReference type="SMART" id="SM00322">
    <property type="entry name" value="KH"/>
    <property type="match status" value="1"/>
</dbReference>
<dbReference type="SUPFAM" id="SSF54791">
    <property type="entry name" value="Eukaryotic type KH-domain (KH-domain type I)"/>
    <property type="match status" value="1"/>
</dbReference>
<dbReference type="SUPFAM" id="SSF109604">
    <property type="entry name" value="HD-domain/PDEase-like"/>
    <property type="match status" value="1"/>
</dbReference>
<dbReference type="PROSITE" id="PS51831">
    <property type="entry name" value="HD"/>
    <property type="match status" value="1"/>
</dbReference>
<dbReference type="PROSITE" id="PS50084">
    <property type="entry name" value="KH_TYPE_1"/>
    <property type="match status" value="1"/>
</dbReference>
<protein>
    <recommendedName>
        <fullName evidence="1">Ribonuclease Y</fullName>
        <shortName evidence="1">RNase Y</shortName>
        <ecNumber evidence="1">3.1.-.-</ecNumber>
    </recommendedName>
</protein>
<feature type="chain" id="PRO_0000344926" description="Ribonuclease Y">
    <location>
        <begin position="1"/>
        <end position="519"/>
    </location>
</feature>
<feature type="transmembrane region" description="Helical" evidence="1">
    <location>
        <begin position="6"/>
        <end position="26"/>
    </location>
</feature>
<feature type="domain" description="KH" evidence="1">
    <location>
        <begin position="209"/>
        <end position="272"/>
    </location>
</feature>
<feature type="domain" description="HD" evidence="2">
    <location>
        <begin position="335"/>
        <end position="428"/>
    </location>
</feature>
<proteinExistence type="inferred from homology"/>
<organism>
    <name type="scientific">Protochlamydia amoebophila (strain UWE25)</name>
    <dbReference type="NCBI Taxonomy" id="264201"/>
    <lineage>
        <taxon>Bacteria</taxon>
        <taxon>Pseudomonadati</taxon>
        <taxon>Chlamydiota</taxon>
        <taxon>Chlamydiia</taxon>
        <taxon>Parachlamydiales</taxon>
        <taxon>Parachlamydiaceae</taxon>
        <taxon>Candidatus Protochlamydia</taxon>
    </lineage>
</organism>
<accession>Q6MCB9</accession>
<sequence length="519" mass="58386">MIENQVPFYLLIFLVGIGLGVLTFWAYHRFALGGFKRISKDIISRAEQETSELRKTNELSLKQKQVEYQRELEQMWQQERKKLQQEEERLKQREDKLESRMNLVEKKLSDTEKREAILIGRKAQLDEEKKQTIESHSKLLSILEKASGLTSSEAKEILLSRLSNEVKTESANLIRRIRKEAEEEAEKIASTIIATSINRLAVSCASESTVCTVTIPNEDMKGRIIGREGRNIRALERETGVNFIIDDTPGAVVLSGFDPVRKHIAKMALTELVQDGRIHPTRIEEVVEKATINVHKQIKQYGEDAALRAGAMNLHPDLINLLGKLKFRFSYGQNVLDHSLEVSHLMGLMAAELGLDIRLAKRIGLLHDLGKAVTHEIEGSHAIIGHDLALKLGENKEVANGIGCHHHEMAPLTIEADLCSAADAISASREGARIEAVEEYIKRLRKLEEIALEFAGVDKAYAMQAGREIRIVVLPDQVDDAGVVNLARDLTKRIEQELSYPGKIKVTVIREKRVVEYAV</sequence>
<reference key="1">
    <citation type="journal article" date="2004" name="Science">
        <title>Illuminating the evolutionary history of chlamydiae.</title>
        <authorList>
            <person name="Horn M."/>
            <person name="Collingro A."/>
            <person name="Schmitz-Esser S."/>
            <person name="Beier C.L."/>
            <person name="Purkhold U."/>
            <person name="Fartmann B."/>
            <person name="Brandt P."/>
            <person name="Nyakatura G.J."/>
            <person name="Droege M."/>
            <person name="Frishman D."/>
            <person name="Rattei T."/>
            <person name="Mewes H.-W."/>
            <person name="Wagner M."/>
        </authorList>
    </citation>
    <scope>NUCLEOTIDE SEQUENCE [LARGE SCALE GENOMIC DNA]</scope>
    <source>
        <strain>UWE25</strain>
    </source>
</reference>